<feature type="chain" id="PRO_1000198233" description="UPF0297 protein CLK_1948">
    <location>
        <begin position="1"/>
        <end position="83"/>
    </location>
</feature>
<accession>B1KXB6</accession>
<comment type="similarity">
    <text evidence="1">Belongs to the UPF0297 family.</text>
</comment>
<gene>
    <name type="ordered locus">CLK_1948</name>
</gene>
<proteinExistence type="inferred from homology"/>
<organism>
    <name type="scientific">Clostridium botulinum (strain Loch Maree / Type A3)</name>
    <dbReference type="NCBI Taxonomy" id="498214"/>
    <lineage>
        <taxon>Bacteria</taxon>
        <taxon>Bacillati</taxon>
        <taxon>Bacillota</taxon>
        <taxon>Clostridia</taxon>
        <taxon>Eubacteriales</taxon>
        <taxon>Clostridiaceae</taxon>
        <taxon>Clostridium</taxon>
    </lineage>
</organism>
<evidence type="ECO:0000255" key="1">
    <source>
        <dbReference type="HAMAP-Rule" id="MF_01507"/>
    </source>
</evidence>
<sequence length="83" mass="9411">MSGDKTIQFDPVENKKTLTKEILTKVYNSLLEKGYNPVNQLVGYLISGDPTYITNYNGARSLVIKLERDEILEEVIKSYLGIN</sequence>
<protein>
    <recommendedName>
        <fullName evidence="1">UPF0297 protein CLK_1948</fullName>
    </recommendedName>
</protein>
<name>Y1948_CLOBM</name>
<reference key="1">
    <citation type="journal article" date="2007" name="PLoS ONE">
        <title>Analysis of the neurotoxin complex genes in Clostridium botulinum A1-A4 and B1 strains: BoNT/A3, /Ba4 and /B1 clusters are located within plasmids.</title>
        <authorList>
            <person name="Smith T.J."/>
            <person name="Hill K.K."/>
            <person name="Foley B.T."/>
            <person name="Detter J.C."/>
            <person name="Munk A.C."/>
            <person name="Bruce D.C."/>
            <person name="Doggett N.A."/>
            <person name="Smith L.A."/>
            <person name="Marks J.D."/>
            <person name="Xie G."/>
            <person name="Brettin T.S."/>
        </authorList>
    </citation>
    <scope>NUCLEOTIDE SEQUENCE [LARGE SCALE GENOMIC DNA]</scope>
    <source>
        <strain>Loch Maree / Type A3</strain>
    </source>
</reference>
<dbReference type="EMBL" id="CP000962">
    <property type="protein sequence ID" value="ACA56466.1"/>
    <property type="molecule type" value="Genomic_DNA"/>
</dbReference>
<dbReference type="RefSeq" id="WP_003385813.1">
    <property type="nucleotide sequence ID" value="NC_010520.1"/>
</dbReference>
<dbReference type="SMR" id="B1KXB6"/>
<dbReference type="KEGG" id="cbl:CLK_1948"/>
<dbReference type="HOGENOM" id="CLU_162466_0_0_9"/>
<dbReference type="HAMAP" id="MF_01507">
    <property type="entry name" value="UPF0297"/>
    <property type="match status" value="1"/>
</dbReference>
<dbReference type="InterPro" id="IPR009309">
    <property type="entry name" value="IreB"/>
</dbReference>
<dbReference type="NCBIfam" id="NF003997">
    <property type="entry name" value="PRK05473.1"/>
    <property type="match status" value="1"/>
</dbReference>
<dbReference type="PANTHER" id="PTHR40067">
    <property type="entry name" value="UPF0297 PROTEIN YRZL"/>
    <property type="match status" value="1"/>
</dbReference>
<dbReference type="PANTHER" id="PTHR40067:SF1">
    <property type="entry name" value="UPF0297 PROTEIN YRZL"/>
    <property type="match status" value="1"/>
</dbReference>
<dbReference type="Pfam" id="PF06135">
    <property type="entry name" value="IreB"/>
    <property type="match status" value="1"/>
</dbReference>
<dbReference type="PIRSF" id="PIRSF037258">
    <property type="entry name" value="DUF965_bac"/>
    <property type="match status" value="1"/>
</dbReference>